<sequence>MPVIKVRENEPFDVALRRFKRSCEKAGVLAEVRRREFYEKPTTERKRAKASAVKRHAKKLARENARRTRLY</sequence>
<protein>
    <recommendedName>
        <fullName evidence="2">Small ribosomal subunit protein bS21</fullName>
    </recommendedName>
    <alternativeName>
        <fullName evidence="4">30S ribosomal protein S21</fullName>
    </alternativeName>
</protein>
<feature type="initiator methionine" description="Removed" evidence="1">
    <location>
        <position position="1"/>
    </location>
</feature>
<feature type="chain" id="PRO_0000266765" description="Small ribosomal subunit protein bS21">
    <location>
        <begin position="2"/>
        <end position="71"/>
    </location>
</feature>
<feature type="region of interest" description="Disordered" evidence="3">
    <location>
        <begin position="43"/>
        <end position="71"/>
    </location>
</feature>
<feature type="compositionally biased region" description="Basic residues" evidence="3">
    <location>
        <begin position="46"/>
        <end position="59"/>
    </location>
</feature>
<feature type="compositionally biased region" description="Basic and acidic residues" evidence="3">
    <location>
        <begin position="60"/>
        <end position="71"/>
    </location>
</feature>
<accession>Q32BQ2</accession>
<keyword id="KW-1185">Reference proteome</keyword>
<keyword id="KW-0687">Ribonucleoprotein</keyword>
<keyword id="KW-0689">Ribosomal protein</keyword>
<organism>
    <name type="scientific">Shigella dysenteriae serotype 1 (strain Sd197)</name>
    <dbReference type="NCBI Taxonomy" id="300267"/>
    <lineage>
        <taxon>Bacteria</taxon>
        <taxon>Pseudomonadati</taxon>
        <taxon>Pseudomonadota</taxon>
        <taxon>Gammaproteobacteria</taxon>
        <taxon>Enterobacterales</taxon>
        <taxon>Enterobacteriaceae</taxon>
        <taxon>Shigella</taxon>
    </lineage>
</organism>
<name>RS21_SHIDS</name>
<gene>
    <name evidence="2" type="primary">rpsU</name>
    <name type="ordered locus">SDY_3249</name>
</gene>
<comment type="similarity">
    <text evidence="2">Belongs to the bacterial ribosomal protein bS21 family.</text>
</comment>
<reference key="1">
    <citation type="journal article" date="2005" name="Nucleic Acids Res.">
        <title>Genome dynamics and diversity of Shigella species, the etiologic agents of bacillary dysentery.</title>
        <authorList>
            <person name="Yang F."/>
            <person name="Yang J."/>
            <person name="Zhang X."/>
            <person name="Chen L."/>
            <person name="Jiang Y."/>
            <person name="Yan Y."/>
            <person name="Tang X."/>
            <person name="Wang J."/>
            <person name="Xiong Z."/>
            <person name="Dong J."/>
            <person name="Xue Y."/>
            <person name="Zhu Y."/>
            <person name="Xu X."/>
            <person name="Sun L."/>
            <person name="Chen S."/>
            <person name="Nie H."/>
            <person name="Peng J."/>
            <person name="Xu J."/>
            <person name="Wang Y."/>
            <person name="Yuan Z."/>
            <person name="Wen Y."/>
            <person name="Yao Z."/>
            <person name="Shen Y."/>
            <person name="Qiang B."/>
            <person name="Hou Y."/>
            <person name="Yu J."/>
            <person name="Jin Q."/>
        </authorList>
    </citation>
    <scope>NUCLEOTIDE SEQUENCE [LARGE SCALE GENOMIC DNA]</scope>
    <source>
        <strain>Sd197</strain>
    </source>
</reference>
<evidence type="ECO:0000250" key="1"/>
<evidence type="ECO:0000255" key="2">
    <source>
        <dbReference type="HAMAP-Rule" id="MF_00358"/>
    </source>
</evidence>
<evidence type="ECO:0000256" key="3">
    <source>
        <dbReference type="SAM" id="MobiDB-lite"/>
    </source>
</evidence>
<evidence type="ECO:0000305" key="4"/>
<dbReference type="EMBL" id="CP000034">
    <property type="protein sequence ID" value="ABB63253.1"/>
    <property type="molecule type" value="Genomic_DNA"/>
</dbReference>
<dbReference type="RefSeq" id="WP_001144069.1">
    <property type="nucleotide sequence ID" value="NC_007606.1"/>
</dbReference>
<dbReference type="RefSeq" id="YP_404744.1">
    <property type="nucleotide sequence ID" value="NC_007606.1"/>
</dbReference>
<dbReference type="SMR" id="Q32BQ2"/>
<dbReference type="STRING" id="300267.SDY_3249"/>
<dbReference type="EnsemblBacteria" id="ABB63253">
    <property type="protein sequence ID" value="ABB63253"/>
    <property type="gene ID" value="SDY_3249"/>
</dbReference>
<dbReference type="GeneID" id="98390195"/>
<dbReference type="KEGG" id="sdy:SDY_3249"/>
<dbReference type="PATRIC" id="fig|300267.13.peg.3883"/>
<dbReference type="HOGENOM" id="CLU_159258_1_0_6"/>
<dbReference type="PRO" id="PR:Q32BQ2"/>
<dbReference type="Proteomes" id="UP000002716">
    <property type="component" value="Chromosome"/>
</dbReference>
<dbReference type="GO" id="GO:1990904">
    <property type="term" value="C:ribonucleoprotein complex"/>
    <property type="evidence" value="ECO:0007669"/>
    <property type="project" value="UniProtKB-KW"/>
</dbReference>
<dbReference type="GO" id="GO:0005840">
    <property type="term" value="C:ribosome"/>
    <property type="evidence" value="ECO:0007669"/>
    <property type="project" value="UniProtKB-KW"/>
</dbReference>
<dbReference type="GO" id="GO:0003735">
    <property type="term" value="F:structural constituent of ribosome"/>
    <property type="evidence" value="ECO:0007669"/>
    <property type="project" value="InterPro"/>
</dbReference>
<dbReference type="GO" id="GO:0006412">
    <property type="term" value="P:translation"/>
    <property type="evidence" value="ECO:0007669"/>
    <property type="project" value="UniProtKB-UniRule"/>
</dbReference>
<dbReference type="FunFam" id="1.20.5.1150:FF:000001">
    <property type="entry name" value="30S ribosomal protein S21"/>
    <property type="match status" value="1"/>
</dbReference>
<dbReference type="Gene3D" id="1.20.5.1150">
    <property type="entry name" value="Ribosomal protein S8"/>
    <property type="match status" value="1"/>
</dbReference>
<dbReference type="HAMAP" id="MF_00358">
    <property type="entry name" value="Ribosomal_bS21"/>
    <property type="match status" value="1"/>
</dbReference>
<dbReference type="InterPro" id="IPR001911">
    <property type="entry name" value="Ribosomal_bS21"/>
</dbReference>
<dbReference type="InterPro" id="IPR018278">
    <property type="entry name" value="Ribosomal_bS21_CS"/>
</dbReference>
<dbReference type="InterPro" id="IPR038380">
    <property type="entry name" value="Ribosomal_bS21_sf"/>
</dbReference>
<dbReference type="NCBIfam" id="TIGR00030">
    <property type="entry name" value="S21p"/>
    <property type="match status" value="1"/>
</dbReference>
<dbReference type="PANTHER" id="PTHR21109">
    <property type="entry name" value="MITOCHONDRIAL 28S RIBOSOMAL PROTEIN S21"/>
    <property type="match status" value="1"/>
</dbReference>
<dbReference type="PANTHER" id="PTHR21109:SF22">
    <property type="entry name" value="SMALL RIBOSOMAL SUBUNIT PROTEIN BS21"/>
    <property type="match status" value="1"/>
</dbReference>
<dbReference type="Pfam" id="PF01165">
    <property type="entry name" value="Ribosomal_S21"/>
    <property type="match status" value="1"/>
</dbReference>
<dbReference type="PRINTS" id="PR00976">
    <property type="entry name" value="RIBOSOMALS21"/>
</dbReference>
<dbReference type="PROSITE" id="PS01181">
    <property type="entry name" value="RIBOSOMAL_S21"/>
    <property type="match status" value="1"/>
</dbReference>
<proteinExistence type="inferred from homology"/>